<keyword id="KW-1185">Reference proteome</keyword>
<proteinExistence type="predicted"/>
<organism>
    <name type="scientific">Caenorhabditis elegans</name>
    <dbReference type="NCBI Taxonomy" id="6239"/>
    <lineage>
        <taxon>Eukaryota</taxon>
        <taxon>Metazoa</taxon>
        <taxon>Ecdysozoa</taxon>
        <taxon>Nematoda</taxon>
        <taxon>Chromadorea</taxon>
        <taxon>Rhabditida</taxon>
        <taxon>Rhabditina</taxon>
        <taxon>Rhabditomorpha</taxon>
        <taxon>Rhabditoidea</taxon>
        <taxon>Rhabditidae</taxon>
        <taxon>Peloderinae</taxon>
        <taxon>Caenorhabditis</taxon>
    </lineage>
</organism>
<feature type="chain" id="PRO_0000065465" description="Uncharacterized protein T16H12.2">
    <location>
        <begin position="1"/>
        <end position="181"/>
    </location>
</feature>
<feature type="region of interest" description="Disordered" evidence="1">
    <location>
        <begin position="151"/>
        <end position="181"/>
    </location>
</feature>
<feature type="compositionally biased region" description="Basic and acidic residues" evidence="1">
    <location>
        <begin position="154"/>
        <end position="166"/>
    </location>
</feature>
<feature type="compositionally biased region" description="Polar residues" evidence="1">
    <location>
        <begin position="167"/>
        <end position="181"/>
    </location>
</feature>
<gene>
    <name type="ORF">T16H12.2</name>
</gene>
<reference key="1">
    <citation type="journal article" date="1998" name="Science">
        <title>Genome sequence of the nematode C. elegans: a platform for investigating biology.</title>
        <authorList>
            <consortium name="The C. elegans sequencing consortium"/>
        </authorList>
    </citation>
    <scope>NUCLEOTIDE SEQUENCE [LARGE SCALE GENOMIC DNA]</scope>
    <source>
        <strain>Bristol N2</strain>
    </source>
</reference>
<sequence>MQTSAQKVIQDLTNRVQAEKEELEQLERERDLWKYNAQMNDKEALRGNERKKNIMKKGGPLCYFCNKNHVPSLCRTYPDGISRQKSLENQGKCIKCLKIGHQNGDNFCEKHHIVCRTCQQSHVKAVCPILYPKKDTPPKILRARRRSLIRAQKKKDFQEPENKHEQLTSTKAPCQENWSDF</sequence>
<accession>P34565</accession>
<name>YNV2_CAEEL</name>
<dbReference type="EMBL" id="Z30662">
    <property type="protein sequence ID" value="CAA83135.1"/>
    <property type="molecule type" value="Genomic_DNA"/>
</dbReference>
<dbReference type="PIR" id="S42380">
    <property type="entry name" value="S42380"/>
</dbReference>
<dbReference type="RefSeq" id="NP_499238.1">
    <property type="nucleotide sequence ID" value="NM_066837.4"/>
</dbReference>
<dbReference type="SMR" id="P34565"/>
<dbReference type="FunCoup" id="P34565">
    <property type="interactions" value="1"/>
</dbReference>
<dbReference type="STRING" id="6239.T16H12.2.1"/>
<dbReference type="PaxDb" id="6239-T16H12.2"/>
<dbReference type="EnsemblMetazoa" id="T16H12.2.1">
    <property type="protein sequence ID" value="T16H12.2.1"/>
    <property type="gene ID" value="WBGene00011812"/>
</dbReference>
<dbReference type="GeneID" id="188559"/>
<dbReference type="KEGG" id="cel:CELE_T16H12.2"/>
<dbReference type="UCSC" id="T16H12.2">
    <property type="organism name" value="c. elegans"/>
</dbReference>
<dbReference type="AGR" id="WB:WBGene00011812"/>
<dbReference type="CTD" id="188559"/>
<dbReference type="WormBase" id="T16H12.2">
    <property type="protein sequence ID" value="CE00323"/>
    <property type="gene ID" value="WBGene00011812"/>
</dbReference>
<dbReference type="HOGENOM" id="CLU_1490316_0_0_1"/>
<dbReference type="InParanoid" id="P34565"/>
<dbReference type="PRO" id="PR:P34565"/>
<dbReference type="Proteomes" id="UP000001940">
    <property type="component" value="Chromosome III"/>
</dbReference>
<dbReference type="Bgee" id="WBGene00011812">
    <property type="expression patterns" value="Expressed in germ line (C elegans) and 3 other cell types or tissues"/>
</dbReference>
<evidence type="ECO:0000256" key="1">
    <source>
        <dbReference type="SAM" id="MobiDB-lite"/>
    </source>
</evidence>
<protein>
    <recommendedName>
        <fullName>Uncharacterized protein T16H12.2</fullName>
    </recommendedName>
</protein>